<evidence type="ECO:0000250" key="1"/>
<evidence type="ECO:0000250" key="2">
    <source>
        <dbReference type="UniProtKB" id="P40014"/>
    </source>
</evidence>
<evidence type="ECO:0000255" key="3"/>
<evidence type="ECO:0000256" key="4">
    <source>
        <dbReference type="SAM" id="MobiDB-lite"/>
    </source>
</evidence>
<evidence type="ECO:0000305" key="5"/>
<reference key="1">
    <citation type="journal article" date="2005" name="Nature">
        <title>Sequencing of Aspergillus nidulans and comparative analysis with A. fumigatus and A. oryzae.</title>
        <authorList>
            <person name="Galagan J.E."/>
            <person name="Calvo S.E."/>
            <person name="Cuomo C."/>
            <person name="Ma L.-J."/>
            <person name="Wortman J.R."/>
            <person name="Batzoglou S."/>
            <person name="Lee S.-I."/>
            <person name="Bastuerkmen M."/>
            <person name="Spevak C.C."/>
            <person name="Clutterbuck J."/>
            <person name="Kapitonov V."/>
            <person name="Jurka J."/>
            <person name="Scazzocchio C."/>
            <person name="Farman M.L."/>
            <person name="Butler J."/>
            <person name="Purcell S."/>
            <person name="Harris S."/>
            <person name="Braus G.H."/>
            <person name="Draht O."/>
            <person name="Busch S."/>
            <person name="D'Enfert C."/>
            <person name="Bouchier C."/>
            <person name="Goldman G.H."/>
            <person name="Bell-Pedersen D."/>
            <person name="Griffiths-Jones S."/>
            <person name="Doonan J.H."/>
            <person name="Yu J."/>
            <person name="Vienken K."/>
            <person name="Pain A."/>
            <person name="Freitag M."/>
            <person name="Selker E.U."/>
            <person name="Archer D.B."/>
            <person name="Penalva M.A."/>
            <person name="Oakley B.R."/>
            <person name="Momany M."/>
            <person name="Tanaka T."/>
            <person name="Kumagai T."/>
            <person name="Asai K."/>
            <person name="Machida M."/>
            <person name="Nierman W.C."/>
            <person name="Denning D.W."/>
            <person name="Caddick M.X."/>
            <person name="Hynes M."/>
            <person name="Paoletti M."/>
            <person name="Fischer R."/>
            <person name="Miller B.L."/>
            <person name="Dyer P.S."/>
            <person name="Sachs M.S."/>
            <person name="Osmani S.A."/>
            <person name="Birren B.W."/>
        </authorList>
    </citation>
    <scope>NUCLEOTIDE SEQUENCE [LARGE SCALE GENOMIC DNA]</scope>
    <source>
        <strain>FGSC A4 / ATCC 38163 / CBS 112.46 / NRRL 194 / M139</strain>
    </source>
</reference>
<reference key="2">
    <citation type="journal article" date="2009" name="Fungal Genet. Biol.">
        <title>The 2008 update of the Aspergillus nidulans genome annotation: a community effort.</title>
        <authorList>
            <person name="Wortman J.R."/>
            <person name="Gilsenan J.M."/>
            <person name="Joardar V."/>
            <person name="Deegan J."/>
            <person name="Clutterbuck J."/>
            <person name="Andersen M.R."/>
            <person name="Archer D."/>
            <person name="Bencina M."/>
            <person name="Braus G."/>
            <person name="Coutinho P."/>
            <person name="von Dohren H."/>
            <person name="Doonan J."/>
            <person name="Driessen A.J."/>
            <person name="Durek P."/>
            <person name="Espeso E."/>
            <person name="Fekete E."/>
            <person name="Flipphi M."/>
            <person name="Estrada C.G."/>
            <person name="Geysens S."/>
            <person name="Goldman G."/>
            <person name="de Groot P.W."/>
            <person name="Hansen K."/>
            <person name="Harris S.D."/>
            <person name="Heinekamp T."/>
            <person name="Helmstaedt K."/>
            <person name="Henrissat B."/>
            <person name="Hofmann G."/>
            <person name="Homan T."/>
            <person name="Horio T."/>
            <person name="Horiuchi H."/>
            <person name="James S."/>
            <person name="Jones M."/>
            <person name="Karaffa L."/>
            <person name="Karanyi Z."/>
            <person name="Kato M."/>
            <person name="Keller N."/>
            <person name="Kelly D.E."/>
            <person name="Kiel J.A."/>
            <person name="Kim J.M."/>
            <person name="van der Klei I.J."/>
            <person name="Klis F.M."/>
            <person name="Kovalchuk A."/>
            <person name="Krasevec N."/>
            <person name="Kubicek C.P."/>
            <person name="Liu B."/>
            <person name="Maccabe A."/>
            <person name="Meyer V."/>
            <person name="Mirabito P."/>
            <person name="Miskei M."/>
            <person name="Mos M."/>
            <person name="Mullins J."/>
            <person name="Nelson D.R."/>
            <person name="Nielsen J."/>
            <person name="Oakley B.R."/>
            <person name="Osmani S.A."/>
            <person name="Pakula T."/>
            <person name="Paszewski A."/>
            <person name="Paulsen I."/>
            <person name="Pilsyk S."/>
            <person name="Pocsi I."/>
            <person name="Punt P.J."/>
            <person name="Ram A.F."/>
            <person name="Ren Q."/>
            <person name="Robellet X."/>
            <person name="Robson G."/>
            <person name="Seiboth B."/>
            <person name="van Solingen P."/>
            <person name="Specht T."/>
            <person name="Sun J."/>
            <person name="Taheri-Talesh N."/>
            <person name="Takeshita N."/>
            <person name="Ussery D."/>
            <person name="vanKuyk P.A."/>
            <person name="Visser H."/>
            <person name="van de Vondervoort P.J."/>
            <person name="de Vries R.P."/>
            <person name="Walton J."/>
            <person name="Xiang X."/>
            <person name="Xiong Y."/>
            <person name="Zeng A.P."/>
            <person name="Brandt B.W."/>
            <person name="Cornell M.J."/>
            <person name="van den Hondel C.A."/>
            <person name="Visser J."/>
            <person name="Oliver S.G."/>
            <person name="Turner G."/>
        </authorList>
    </citation>
    <scope>GENOME REANNOTATION</scope>
    <source>
        <strain>FGSC A4 / ATCC 38163 / CBS 112.46 / NRRL 194 / M139</strain>
    </source>
</reference>
<proteinExistence type="inferred from homology"/>
<feature type="chain" id="PRO_0000246675" description="Probable kinetochore protein spc25">
    <location>
        <begin position="1"/>
        <end position="257"/>
    </location>
</feature>
<feature type="region of interest" description="Disordered" evidence="4">
    <location>
        <begin position="1"/>
        <end position="24"/>
    </location>
</feature>
<feature type="coiled-coil region" evidence="3">
    <location>
        <begin position="58"/>
        <end position="151"/>
    </location>
</feature>
<feature type="compositionally biased region" description="Polar residues" evidence="4">
    <location>
        <begin position="1"/>
        <end position="12"/>
    </location>
</feature>
<accession>Q5BDI8</accession>
<accession>C8VRN0</accession>
<dbReference type="EMBL" id="AACD01000019">
    <property type="protein sequence ID" value="EAA65222.1"/>
    <property type="molecule type" value="Genomic_DNA"/>
</dbReference>
<dbReference type="EMBL" id="BN001308">
    <property type="protein sequence ID" value="CBF87587.1"/>
    <property type="molecule type" value="Genomic_DNA"/>
</dbReference>
<dbReference type="RefSeq" id="XP_658996.1">
    <property type="nucleotide sequence ID" value="XM_653904.1"/>
</dbReference>
<dbReference type="SMR" id="Q5BDI8"/>
<dbReference type="STRING" id="227321.Q5BDI8"/>
<dbReference type="EnsemblFungi" id="CBF87587">
    <property type="protein sequence ID" value="CBF87587"/>
    <property type="gene ID" value="ANIA_01392"/>
</dbReference>
<dbReference type="KEGG" id="ani:ANIA_01392"/>
<dbReference type="VEuPathDB" id="FungiDB:AN1392"/>
<dbReference type="eggNOG" id="KOG4657">
    <property type="taxonomic scope" value="Eukaryota"/>
</dbReference>
<dbReference type="HOGENOM" id="CLU_065188_0_0_1"/>
<dbReference type="InParanoid" id="Q5BDI8"/>
<dbReference type="OMA" id="HEDQRMK"/>
<dbReference type="OrthoDB" id="4056921at2759"/>
<dbReference type="Proteomes" id="UP000000560">
    <property type="component" value="Chromosome VIII"/>
</dbReference>
<dbReference type="GO" id="GO:0031262">
    <property type="term" value="C:Ndc80 complex"/>
    <property type="evidence" value="ECO:0000250"/>
    <property type="project" value="UniProtKB"/>
</dbReference>
<dbReference type="GO" id="GO:0005634">
    <property type="term" value="C:nucleus"/>
    <property type="evidence" value="ECO:0007669"/>
    <property type="project" value="UniProtKB-SubCell"/>
</dbReference>
<dbReference type="GO" id="GO:0051301">
    <property type="term" value="P:cell division"/>
    <property type="evidence" value="ECO:0007669"/>
    <property type="project" value="UniProtKB-KW"/>
</dbReference>
<dbReference type="GO" id="GO:0007059">
    <property type="term" value="P:chromosome segregation"/>
    <property type="evidence" value="ECO:0000318"/>
    <property type="project" value="GO_Central"/>
</dbReference>
<dbReference type="CDD" id="cd23784">
    <property type="entry name" value="RWD_Spc25"/>
    <property type="match status" value="1"/>
</dbReference>
<dbReference type="FunFam" id="3.30.457.50:FF:000001">
    <property type="entry name" value="Probable kinetochore protein spc25"/>
    <property type="match status" value="1"/>
</dbReference>
<dbReference type="Gene3D" id="3.30.457.50">
    <property type="entry name" value="Chromosome segregation protein Spc25"/>
    <property type="match status" value="1"/>
</dbReference>
<dbReference type="InterPro" id="IPR045143">
    <property type="entry name" value="Spc25"/>
</dbReference>
<dbReference type="InterPro" id="IPR013255">
    <property type="entry name" value="Spc25_C"/>
</dbReference>
<dbReference type="PANTHER" id="PTHR14281:SF0">
    <property type="entry name" value="KINETOCHORE PROTEIN SPC25"/>
    <property type="match status" value="1"/>
</dbReference>
<dbReference type="PANTHER" id="PTHR14281">
    <property type="entry name" value="KINETOCHORE PROTEIN SPC25-RELATED"/>
    <property type="match status" value="1"/>
</dbReference>
<dbReference type="Pfam" id="PF08234">
    <property type="entry name" value="Spindle_Spc25"/>
    <property type="match status" value="1"/>
</dbReference>
<comment type="function">
    <text evidence="1">Acts as a component of the essential kinetochore-associated NDC80 complex, which is required for chromosome segregation and spindle checkpoint activity.</text>
</comment>
<comment type="subunit">
    <text evidence="1">Component of the NDC80 complex, which consists of ndc80, nuf2, spc24 and spc25.</text>
</comment>
<comment type="subcellular location">
    <subcellularLocation>
        <location evidence="2">Nucleus</location>
    </subcellularLocation>
    <subcellularLocation>
        <location evidence="2">Chromosome</location>
        <location evidence="2">Centromere</location>
        <location evidence="2">Kinetochore</location>
    </subcellularLocation>
    <text evidence="2">Associated with kinetochores.</text>
</comment>
<comment type="similarity">
    <text evidence="5">Belongs to the SPC25 family.</text>
</comment>
<organism>
    <name type="scientific">Emericella nidulans (strain FGSC A4 / ATCC 38163 / CBS 112.46 / NRRL 194 / M139)</name>
    <name type="common">Aspergillus nidulans</name>
    <dbReference type="NCBI Taxonomy" id="227321"/>
    <lineage>
        <taxon>Eukaryota</taxon>
        <taxon>Fungi</taxon>
        <taxon>Dikarya</taxon>
        <taxon>Ascomycota</taxon>
        <taxon>Pezizomycotina</taxon>
        <taxon>Eurotiomycetes</taxon>
        <taxon>Eurotiomycetidae</taxon>
        <taxon>Eurotiales</taxon>
        <taxon>Aspergillaceae</taxon>
        <taxon>Aspergillus</taxon>
        <taxon>Aspergillus subgen. Nidulantes</taxon>
    </lineage>
</organism>
<name>SPC25_EMENI</name>
<keyword id="KW-0131">Cell cycle</keyword>
<keyword id="KW-0132">Cell division</keyword>
<keyword id="KW-0137">Centromere</keyword>
<keyword id="KW-0158">Chromosome</keyword>
<keyword id="KW-0175">Coiled coil</keyword>
<keyword id="KW-0995">Kinetochore</keyword>
<keyword id="KW-0498">Mitosis</keyword>
<keyword id="KW-0539">Nucleus</keyword>
<keyword id="KW-1185">Reference proteome</keyword>
<gene>
    <name type="primary">spc25</name>
    <name type="ORF">AN1392</name>
</gene>
<protein>
    <recommendedName>
        <fullName>Probable kinetochore protein spc25</fullName>
    </recommendedName>
</protein>
<sequence length="257" mass="30152">MSSFDPSLSTSGMRPPLASATAPSMADSLPSINFGFEELRSRMAQFTAQFDAFIERGRKQVLEERNQFKIGLAELQEDERMRQRDIEILNLKSQTHEQTLQKEAAEAAEMHAAVSSVTLERDSRLTKRDRLKQQIEETQKAINQKLEAQRSHSRYLDAQARLNVPELEFWQDYLCLRIEGAGREDRLKFVYSHLLEKDWEAEAWFELGTSSRDYEVFHSRPKLDREYLDRELDILNEDRDFGAFLKRMRRLFIEALK</sequence>